<dbReference type="EC" id="3.1.3.82"/>
<dbReference type="EMBL" id="AL590842">
    <property type="protein sequence ID" value="CAL19740.1"/>
    <property type="molecule type" value="Genomic_DNA"/>
</dbReference>
<dbReference type="EMBL" id="AE009952">
    <property type="protein sequence ID" value="AAM86653.1"/>
    <property type="molecule type" value="Genomic_DNA"/>
</dbReference>
<dbReference type="EMBL" id="AE017042">
    <property type="protein sequence ID" value="AAS62959.1"/>
    <property type="molecule type" value="Genomic_DNA"/>
</dbReference>
<dbReference type="PIR" id="AB0132">
    <property type="entry name" value="AB0132"/>
</dbReference>
<dbReference type="RefSeq" id="WP_002220062.1">
    <property type="nucleotide sequence ID" value="NZ_WUCM01000044.1"/>
</dbReference>
<dbReference type="RefSeq" id="YP_002346118.1">
    <property type="nucleotide sequence ID" value="NC_003143.1"/>
</dbReference>
<dbReference type="SMR" id="Q8ZH37"/>
<dbReference type="IntAct" id="Q8ZH37">
    <property type="interactions" value="5"/>
</dbReference>
<dbReference type="STRING" id="214092.YPO1074"/>
<dbReference type="PaxDb" id="214092-YPO1074"/>
<dbReference type="DNASU" id="1148050"/>
<dbReference type="EnsemblBacteria" id="AAS62959">
    <property type="protein sequence ID" value="AAS62959"/>
    <property type="gene ID" value="YP_2775"/>
</dbReference>
<dbReference type="GeneID" id="57977486"/>
<dbReference type="KEGG" id="ype:YPO1074"/>
<dbReference type="KEGG" id="ypk:y3103"/>
<dbReference type="KEGG" id="ypm:YP_2775"/>
<dbReference type="PATRIC" id="fig|214092.21.peg.1363"/>
<dbReference type="eggNOG" id="COG0241">
    <property type="taxonomic scope" value="Bacteria"/>
</dbReference>
<dbReference type="HOGENOM" id="CLU_085077_3_0_6"/>
<dbReference type="OMA" id="FMIGDKE"/>
<dbReference type="OrthoDB" id="9781367at2"/>
<dbReference type="UniPathway" id="UPA00356">
    <property type="reaction ID" value="UER00438"/>
</dbReference>
<dbReference type="UniPathway" id="UPA00958"/>
<dbReference type="Proteomes" id="UP000000815">
    <property type="component" value="Chromosome"/>
</dbReference>
<dbReference type="Proteomes" id="UP000001019">
    <property type="component" value="Chromosome"/>
</dbReference>
<dbReference type="Proteomes" id="UP000002490">
    <property type="component" value="Chromosome"/>
</dbReference>
<dbReference type="GO" id="GO:0005737">
    <property type="term" value="C:cytoplasm"/>
    <property type="evidence" value="ECO:0007669"/>
    <property type="project" value="UniProtKB-SubCell"/>
</dbReference>
<dbReference type="GO" id="GO:0034200">
    <property type="term" value="F:D-glycero-beta-D-manno-heptose 1,7-bisphosphate 7-phosphatase activity"/>
    <property type="evidence" value="ECO:0000250"/>
    <property type="project" value="UniProtKB"/>
</dbReference>
<dbReference type="GO" id="GO:0000287">
    <property type="term" value="F:magnesium ion binding"/>
    <property type="evidence" value="ECO:0000250"/>
    <property type="project" value="UniProtKB"/>
</dbReference>
<dbReference type="GO" id="GO:0008270">
    <property type="term" value="F:zinc ion binding"/>
    <property type="evidence" value="ECO:0000250"/>
    <property type="project" value="UniProtKB"/>
</dbReference>
<dbReference type="GO" id="GO:0097171">
    <property type="term" value="P:ADP-L-glycero-beta-D-manno-heptose biosynthetic process"/>
    <property type="evidence" value="ECO:0007669"/>
    <property type="project" value="UniProtKB-UniPathway"/>
</dbReference>
<dbReference type="GO" id="GO:0009244">
    <property type="term" value="P:lipopolysaccharide core region biosynthetic process"/>
    <property type="evidence" value="ECO:0007669"/>
    <property type="project" value="UniProtKB-UniPathway"/>
</dbReference>
<dbReference type="CDD" id="cd07503">
    <property type="entry name" value="HAD_HisB-N"/>
    <property type="match status" value="1"/>
</dbReference>
<dbReference type="FunFam" id="3.40.50.1000:FF:000037">
    <property type="entry name" value="D,D-heptose 1,7-bisphosphate phosphatase"/>
    <property type="match status" value="1"/>
</dbReference>
<dbReference type="Gene3D" id="3.40.50.1000">
    <property type="entry name" value="HAD superfamily/HAD-like"/>
    <property type="match status" value="1"/>
</dbReference>
<dbReference type="InterPro" id="IPR036412">
    <property type="entry name" value="HAD-like_sf"/>
</dbReference>
<dbReference type="InterPro" id="IPR006549">
    <property type="entry name" value="HAD-SF_hydro_IIIA"/>
</dbReference>
<dbReference type="InterPro" id="IPR023214">
    <property type="entry name" value="HAD_sf"/>
</dbReference>
<dbReference type="InterPro" id="IPR004446">
    <property type="entry name" value="Heptose_bisP_phosphatase"/>
</dbReference>
<dbReference type="InterPro" id="IPR006543">
    <property type="entry name" value="Histidinol-phos"/>
</dbReference>
<dbReference type="NCBIfam" id="TIGR00213">
    <property type="entry name" value="GmhB_yaeD"/>
    <property type="match status" value="1"/>
</dbReference>
<dbReference type="NCBIfam" id="TIGR01662">
    <property type="entry name" value="HAD-SF-IIIA"/>
    <property type="match status" value="1"/>
</dbReference>
<dbReference type="NCBIfam" id="TIGR01656">
    <property type="entry name" value="Histidinol-ppas"/>
    <property type="match status" value="1"/>
</dbReference>
<dbReference type="NCBIfam" id="NF006506">
    <property type="entry name" value="PRK08942.1"/>
    <property type="match status" value="1"/>
</dbReference>
<dbReference type="PANTHER" id="PTHR42891">
    <property type="entry name" value="D-GLYCERO-BETA-D-MANNO-HEPTOSE-1,7-BISPHOSPHATE 7-PHOSPHATASE"/>
    <property type="match status" value="1"/>
</dbReference>
<dbReference type="PANTHER" id="PTHR42891:SF1">
    <property type="entry name" value="D-GLYCERO-BETA-D-MANNO-HEPTOSE-1,7-BISPHOSPHATE 7-PHOSPHATASE"/>
    <property type="match status" value="1"/>
</dbReference>
<dbReference type="Pfam" id="PF13242">
    <property type="entry name" value="Hydrolase_like"/>
    <property type="match status" value="1"/>
</dbReference>
<dbReference type="PIRSF" id="PIRSF004682">
    <property type="entry name" value="GmhB"/>
    <property type="match status" value="1"/>
</dbReference>
<dbReference type="SFLD" id="SFLDG01134">
    <property type="entry name" value="C1.5.5:_Heptose_Bisphosphate_P"/>
    <property type="match status" value="1"/>
</dbReference>
<dbReference type="SFLD" id="SFLDS00003">
    <property type="entry name" value="Haloacid_Dehalogenase"/>
    <property type="match status" value="1"/>
</dbReference>
<dbReference type="SUPFAM" id="SSF56784">
    <property type="entry name" value="HAD-like"/>
    <property type="match status" value="1"/>
</dbReference>
<name>GMHBB_YERPE</name>
<feature type="chain" id="PRO_0000209409" description="D-glycero-beta-D-manno-heptose-1,7-bisphosphate 7-phosphatase">
    <location>
        <begin position="1"/>
        <end position="188"/>
    </location>
</feature>
<feature type="active site" description="Nucleophile" evidence="1">
    <location>
        <position position="11"/>
    </location>
</feature>
<feature type="active site" description="Proton donor" evidence="1">
    <location>
        <position position="13"/>
    </location>
</feature>
<feature type="binding site" evidence="1">
    <location>
        <begin position="11"/>
        <end position="13"/>
    </location>
    <ligand>
        <name>substrate</name>
    </ligand>
</feature>
<feature type="binding site" evidence="1">
    <location>
        <position position="11"/>
    </location>
    <ligand>
        <name>Mg(2+)</name>
        <dbReference type="ChEBI" id="CHEBI:18420"/>
    </ligand>
</feature>
<feature type="binding site" evidence="1">
    <location>
        <position position="13"/>
    </location>
    <ligand>
        <name>Mg(2+)</name>
        <dbReference type="ChEBI" id="CHEBI:18420"/>
    </ligand>
</feature>
<feature type="binding site" evidence="1">
    <location>
        <begin position="19"/>
        <end position="22"/>
    </location>
    <ligand>
        <name>substrate</name>
    </ligand>
</feature>
<feature type="binding site" evidence="1">
    <location>
        <begin position="53"/>
        <end position="56"/>
    </location>
    <ligand>
        <name>substrate</name>
    </ligand>
</feature>
<feature type="binding site" evidence="2">
    <location>
        <position position="92"/>
    </location>
    <ligand>
        <name>Zn(2+)</name>
        <dbReference type="ChEBI" id="CHEBI:29105"/>
    </ligand>
</feature>
<feature type="binding site" evidence="2">
    <location>
        <position position="94"/>
    </location>
    <ligand>
        <name>Zn(2+)</name>
        <dbReference type="ChEBI" id="CHEBI:29105"/>
    </ligand>
</feature>
<feature type="binding site" evidence="2">
    <location>
        <position position="107"/>
    </location>
    <ligand>
        <name>Zn(2+)</name>
        <dbReference type="ChEBI" id="CHEBI:29105"/>
    </ligand>
</feature>
<feature type="binding site" evidence="2">
    <location>
        <position position="109"/>
    </location>
    <ligand>
        <name>Zn(2+)</name>
        <dbReference type="ChEBI" id="CHEBI:29105"/>
    </ligand>
</feature>
<feature type="binding site" evidence="1">
    <location>
        <begin position="110"/>
        <end position="111"/>
    </location>
    <ligand>
        <name>substrate</name>
    </ligand>
</feature>
<feature type="binding site" evidence="1">
    <location>
        <position position="136"/>
    </location>
    <ligand>
        <name>Mg(2+)</name>
        <dbReference type="ChEBI" id="CHEBI:18420"/>
    </ligand>
</feature>
<feature type="binding site" evidence="1">
    <location>
        <position position="137"/>
    </location>
    <ligand>
        <name>Mg(2+)</name>
        <dbReference type="ChEBI" id="CHEBI:18420"/>
    </ligand>
</feature>
<feature type="binding site" evidence="1">
    <location>
        <position position="137"/>
    </location>
    <ligand>
        <name>substrate</name>
    </ligand>
</feature>
<feature type="site" description="Stabilizes the phosphoryl group" evidence="1">
    <location>
        <position position="53"/>
    </location>
</feature>
<feature type="site" description="Contributes to substrate recognition" evidence="1">
    <location>
        <position position="110"/>
    </location>
</feature>
<feature type="site" description="Stabilizes the phosphoryl group" evidence="1">
    <location>
        <position position="111"/>
    </location>
</feature>
<keyword id="KW-0119">Carbohydrate metabolism</keyword>
<keyword id="KW-0963">Cytoplasm</keyword>
<keyword id="KW-0378">Hydrolase</keyword>
<keyword id="KW-0448">Lipopolysaccharide biosynthesis</keyword>
<keyword id="KW-0460">Magnesium</keyword>
<keyword id="KW-0479">Metal-binding</keyword>
<keyword id="KW-1185">Reference proteome</keyword>
<keyword id="KW-0862">Zinc</keyword>
<gene>
    <name type="primary">gmhB</name>
    <name type="ordered locus">YPO1074</name>
    <name type="ordered locus">y3103</name>
    <name type="ordered locus">YP_2775</name>
</gene>
<comment type="function">
    <text evidence="1">Converts the D-glycero-beta-D-manno-heptose 1,7-bisphosphate intermediate into D-glycero-beta-D-manno-heptose 1-phosphate by removing the phosphate group at the C-7 position.</text>
</comment>
<comment type="catalytic activity">
    <reaction>
        <text>D-glycero-beta-D-manno-heptose 1,7-bisphosphate + H2O = D-glycero-beta-D-manno-heptose 1-phosphate + phosphate</text>
        <dbReference type="Rhea" id="RHEA:28518"/>
        <dbReference type="ChEBI" id="CHEBI:15377"/>
        <dbReference type="ChEBI" id="CHEBI:43474"/>
        <dbReference type="ChEBI" id="CHEBI:60208"/>
        <dbReference type="ChEBI" id="CHEBI:61593"/>
        <dbReference type="EC" id="3.1.3.82"/>
    </reaction>
</comment>
<comment type="cofactor">
    <cofactor evidence="1">
        <name>Mg(2+)</name>
        <dbReference type="ChEBI" id="CHEBI:18420"/>
    </cofactor>
</comment>
<comment type="cofactor">
    <cofactor evidence="1">
        <name>Zn(2+)</name>
        <dbReference type="ChEBI" id="CHEBI:29105"/>
    </cofactor>
</comment>
<comment type="pathway">
    <text>Nucleotide-sugar biosynthesis; ADP-L-glycero-beta-D-manno-heptose biosynthesis; ADP-L-glycero-beta-D-manno-heptose from D-glycero-beta-D-manno-heptose 7-phosphate: step 2/4.</text>
</comment>
<comment type="pathway">
    <text>Bacterial outer membrane biogenesis; LPS core biosynthesis.</text>
</comment>
<comment type="subunit">
    <text evidence="1">Monomer.</text>
</comment>
<comment type="subcellular location">
    <subcellularLocation>
        <location evidence="1">Cytoplasm</location>
    </subcellularLocation>
</comment>
<comment type="similarity">
    <text evidence="3">Belongs to the GmhB family.</text>
</comment>
<protein>
    <recommendedName>
        <fullName>D-glycero-beta-D-manno-heptose-1,7-bisphosphate 7-phosphatase</fullName>
        <ecNumber>3.1.3.82</ecNumber>
    </recommendedName>
    <alternativeName>
        <fullName>D,D-heptose 1,7-bisphosphate phosphatase</fullName>
        <shortName>HBP phosphatase</shortName>
    </alternativeName>
</protein>
<sequence length="188" mass="20702">MTQSVPAIFLDRDGTVNVDHGYVHEIDNFQFIDGVIDACRELKEMGFALVLVTNQSGIARGMFTEEQFLSLTEWMDWSLADRGVDLDGIYFCPHHPDGSVAEFSETCECRKPLPGMLLQAQNELNIDMAASYMVGDKIEDMQAALAANIGTKVLVRTGKPVTAEGEAAADWVLNSLADLPKAIKARYK</sequence>
<evidence type="ECO:0000250" key="1"/>
<evidence type="ECO:0000250" key="2">
    <source>
        <dbReference type="UniProtKB" id="Q7WG29"/>
    </source>
</evidence>
<evidence type="ECO:0000305" key="3"/>
<accession>Q8ZH37</accession>
<accession>Q0WHX0</accession>
<accession>Q74S62</accession>
<accession>Q7CH28</accession>
<reference key="1">
    <citation type="journal article" date="2001" name="Nature">
        <title>Genome sequence of Yersinia pestis, the causative agent of plague.</title>
        <authorList>
            <person name="Parkhill J."/>
            <person name="Wren B.W."/>
            <person name="Thomson N.R."/>
            <person name="Titball R.W."/>
            <person name="Holden M.T.G."/>
            <person name="Prentice M.B."/>
            <person name="Sebaihia M."/>
            <person name="James K.D."/>
            <person name="Churcher C.M."/>
            <person name="Mungall K.L."/>
            <person name="Baker S."/>
            <person name="Basham D."/>
            <person name="Bentley S.D."/>
            <person name="Brooks K."/>
            <person name="Cerdeno-Tarraga A.-M."/>
            <person name="Chillingworth T."/>
            <person name="Cronin A."/>
            <person name="Davies R.M."/>
            <person name="Davis P."/>
            <person name="Dougan G."/>
            <person name="Feltwell T."/>
            <person name="Hamlin N."/>
            <person name="Holroyd S."/>
            <person name="Jagels K."/>
            <person name="Karlyshev A.V."/>
            <person name="Leather S."/>
            <person name="Moule S."/>
            <person name="Oyston P.C.F."/>
            <person name="Quail M.A."/>
            <person name="Rutherford K.M."/>
            <person name="Simmonds M."/>
            <person name="Skelton J."/>
            <person name="Stevens K."/>
            <person name="Whitehead S."/>
            <person name="Barrell B.G."/>
        </authorList>
    </citation>
    <scope>NUCLEOTIDE SEQUENCE [LARGE SCALE GENOMIC DNA]</scope>
    <source>
        <strain>CO-92 / Biovar Orientalis</strain>
    </source>
</reference>
<reference key="2">
    <citation type="journal article" date="2002" name="J. Bacteriol.">
        <title>Genome sequence of Yersinia pestis KIM.</title>
        <authorList>
            <person name="Deng W."/>
            <person name="Burland V."/>
            <person name="Plunkett G. III"/>
            <person name="Boutin A."/>
            <person name="Mayhew G.F."/>
            <person name="Liss P."/>
            <person name="Perna N.T."/>
            <person name="Rose D.J."/>
            <person name="Mau B."/>
            <person name="Zhou S."/>
            <person name="Schwartz D.C."/>
            <person name="Fetherston J.D."/>
            <person name="Lindler L.E."/>
            <person name="Brubaker R.R."/>
            <person name="Plano G.V."/>
            <person name="Straley S.C."/>
            <person name="McDonough K.A."/>
            <person name="Nilles M.L."/>
            <person name="Matson J.S."/>
            <person name="Blattner F.R."/>
            <person name="Perry R.D."/>
        </authorList>
    </citation>
    <scope>NUCLEOTIDE SEQUENCE [LARGE SCALE GENOMIC DNA]</scope>
    <source>
        <strain>KIM10+ / Biovar Mediaevalis</strain>
    </source>
</reference>
<reference key="3">
    <citation type="journal article" date="2004" name="DNA Res.">
        <title>Complete genome sequence of Yersinia pestis strain 91001, an isolate avirulent to humans.</title>
        <authorList>
            <person name="Song Y."/>
            <person name="Tong Z."/>
            <person name="Wang J."/>
            <person name="Wang L."/>
            <person name="Guo Z."/>
            <person name="Han Y."/>
            <person name="Zhang J."/>
            <person name="Pei D."/>
            <person name="Zhou D."/>
            <person name="Qin H."/>
            <person name="Pang X."/>
            <person name="Han Y."/>
            <person name="Zhai J."/>
            <person name="Li M."/>
            <person name="Cui B."/>
            <person name="Qi Z."/>
            <person name="Jin L."/>
            <person name="Dai R."/>
            <person name="Chen F."/>
            <person name="Li S."/>
            <person name="Ye C."/>
            <person name="Du Z."/>
            <person name="Lin W."/>
            <person name="Wang J."/>
            <person name="Yu J."/>
            <person name="Yang H."/>
            <person name="Wang J."/>
            <person name="Huang P."/>
            <person name="Yang R."/>
        </authorList>
    </citation>
    <scope>NUCLEOTIDE SEQUENCE [LARGE SCALE GENOMIC DNA]</scope>
    <source>
        <strain>91001 / Biovar Mediaevalis</strain>
    </source>
</reference>
<reference key="4">
    <citation type="journal article" date="2002" name="Microbiology">
        <title>Novel pathways for biosynthesis of nucleotide-activated glycero-manno-heptose precursors of bacterial glycoproteins and cell surface polysaccharides.</title>
        <authorList>
            <person name="Valvano M.A."/>
            <person name="Messner P."/>
            <person name="Kosma P."/>
        </authorList>
    </citation>
    <scope>BIOSYNTHESIS OF NUCLEOTIDE-ACTIVATED GLYCERO-MANNO-HEPTOSE</scope>
</reference>
<organism>
    <name type="scientific">Yersinia pestis</name>
    <dbReference type="NCBI Taxonomy" id="632"/>
    <lineage>
        <taxon>Bacteria</taxon>
        <taxon>Pseudomonadati</taxon>
        <taxon>Pseudomonadota</taxon>
        <taxon>Gammaproteobacteria</taxon>
        <taxon>Enterobacterales</taxon>
        <taxon>Yersiniaceae</taxon>
        <taxon>Yersinia</taxon>
    </lineage>
</organism>
<proteinExistence type="inferred from homology"/>